<gene>
    <name type="primary">gI</name>
    <name type="ORF">US7</name>
</gene>
<protein>
    <recommendedName>
        <fullName>Envelope glycoprotein I</fullName>
    </recommendedName>
</protein>
<evidence type="ECO:0000250" key="1"/>
<evidence type="ECO:0000255" key="2"/>
<evidence type="ECO:0000256" key="3">
    <source>
        <dbReference type="SAM" id="MobiDB-lite"/>
    </source>
</evidence>
<evidence type="ECO:0000305" key="4"/>
<keyword id="KW-0325">Glycoprotein</keyword>
<keyword id="KW-1031">Host cell junction</keyword>
<keyword id="KW-1032">Host cell membrane</keyword>
<keyword id="KW-1040">Host Golgi apparatus</keyword>
<keyword id="KW-1043">Host membrane</keyword>
<keyword id="KW-0472">Membrane</keyword>
<keyword id="KW-0597">Phosphoprotein</keyword>
<keyword id="KW-1185">Reference proteome</keyword>
<keyword id="KW-0732">Signal</keyword>
<keyword id="KW-0812">Transmembrane</keyword>
<keyword id="KW-1133">Transmembrane helix</keyword>
<keyword id="KW-0261">Viral envelope protein</keyword>
<keyword id="KW-0946">Virion</keyword>
<proteinExistence type="inferred from homology"/>
<organism>
    <name type="scientific">Psittacid herpesvirus 1 (isolate Amazon parrot/-/97-0001/1997)</name>
    <name type="common">PsHV-1</name>
    <name type="synonym">Pacheco's disease virus</name>
    <dbReference type="NCBI Taxonomy" id="670426"/>
    <lineage>
        <taxon>Viruses</taxon>
        <taxon>Duplodnaviria</taxon>
        <taxon>Heunggongvirae</taxon>
        <taxon>Peploviricota</taxon>
        <taxon>Herviviricetes</taxon>
        <taxon>Herpesvirales</taxon>
        <taxon>Orthoherpesviridae</taxon>
        <taxon>Alphaherpesvirinae</taxon>
        <taxon>Iltovirus</taxon>
        <taxon>Iltovirus psittacidalpha1</taxon>
        <taxon>Psittacid alphaherpesvirus 1</taxon>
    </lineage>
</organism>
<dbReference type="EMBL" id="AY372243">
    <property type="protein sequence ID" value="AAQ73755.1"/>
    <property type="molecule type" value="Genomic_DNA"/>
</dbReference>
<dbReference type="RefSeq" id="NP_944449.1">
    <property type="nucleotide sequence ID" value="NC_005264.1"/>
</dbReference>
<dbReference type="SMR" id="Q6UDF5"/>
<dbReference type="GlyCosmos" id="Q6UDF5">
    <property type="glycosylation" value="5 sites, No reported glycans"/>
</dbReference>
<dbReference type="GeneID" id="2656995"/>
<dbReference type="KEGG" id="vg:2656995"/>
<dbReference type="Proteomes" id="UP000006840">
    <property type="component" value="Segment"/>
</dbReference>
<dbReference type="GO" id="GO:0043657">
    <property type="term" value="C:host cell"/>
    <property type="evidence" value="ECO:0007669"/>
    <property type="project" value="InterPro"/>
</dbReference>
<dbReference type="GO" id="GO:0044178">
    <property type="term" value="C:host cell Golgi membrane"/>
    <property type="evidence" value="ECO:0007669"/>
    <property type="project" value="UniProtKB-SubCell"/>
</dbReference>
<dbReference type="GO" id="GO:0044156">
    <property type="term" value="C:host cell junction"/>
    <property type="evidence" value="ECO:0007669"/>
    <property type="project" value="UniProtKB-SubCell"/>
</dbReference>
<dbReference type="GO" id="GO:0016020">
    <property type="term" value="C:membrane"/>
    <property type="evidence" value="ECO:0007669"/>
    <property type="project" value="UniProtKB-KW"/>
</dbReference>
<dbReference type="GO" id="GO:0019031">
    <property type="term" value="C:viral envelope"/>
    <property type="evidence" value="ECO:0007669"/>
    <property type="project" value="UniProtKB-KW"/>
</dbReference>
<dbReference type="GO" id="GO:0055036">
    <property type="term" value="C:virion membrane"/>
    <property type="evidence" value="ECO:0007669"/>
    <property type="project" value="UniProtKB-SubCell"/>
</dbReference>
<dbReference type="InterPro" id="IPR002874">
    <property type="entry name" value="Herpes_gI"/>
</dbReference>
<dbReference type="Pfam" id="PF01688">
    <property type="entry name" value="Herpes_gI"/>
    <property type="match status" value="1"/>
</dbReference>
<name>GI_PSHV1</name>
<accession>Q6UDF5</accession>
<comment type="function">
    <text>In epithelial cells, the heterodimer gE/gI is required for the cell-to-cell spread of the virus, by sorting nascent virions to cell junctions. Once the virus reaches the cell junctions, virus particles can spread to adjacent cells extremely rapidly through interactions with cellular receptors that accumulate at these junctions. Implicated in basolateral spread in polarized cells. In neuronal cells, gE/gI is essential for the anterograde spread of the infection throughout the host nervous system. Together with US9, the heterodimer gE/gI is involved in the sorting and transport of viral structural components toward axon tips.</text>
</comment>
<comment type="subunit">
    <text evidence="1">Interacts with gE.</text>
</comment>
<comment type="subcellular location">
    <subcellularLocation>
        <location evidence="1">Virion membrane</location>
        <topology evidence="1">Single-pass membrane protein</topology>
    </subcellularLocation>
    <subcellularLocation>
        <location evidence="4">Host cell membrane</location>
        <topology evidence="4">Single-pass type I membrane protein</topology>
    </subcellularLocation>
    <subcellularLocation>
        <location evidence="1">Host cell junction</location>
    </subcellularLocation>
    <subcellularLocation>
        <location evidence="1">Host Golgi apparatus membrane</location>
        <topology evidence="1">Single-pass type I membrane protein</topology>
    </subcellularLocation>
    <text evidence="1">During virion morphogenesis, this protein probably accumulates in the endosomes and trans-Golgi where secondary envelopment occurs. It is probably transported to the cell surface from where it is endocytosed and directed to the trans-Golgi network (TGN). The heterodimer gE/gI then redistribute to cell junctions to promote cell-cell spread later in the infection (By similarity).</text>
</comment>
<comment type="similarity">
    <text evidence="4">Belongs to the alphaherpesvirinae glycoprotein I family.</text>
</comment>
<reference key="1">
    <citation type="journal article" date="2006" name="J. Virol.">
        <title>Psittacid herpesvirus 1 and infectious laryngotracheitis virus: Comparative genome sequence analysis of two avian alphaherpesviruses.</title>
        <authorList>
            <person name="Thureen D.R."/>
            <person name="Keeler C.L. Jr."/>
        </authorList>
    </citation>
    <scope>NUCLEOTIDE SEQUENCE [LARGE SCALE GENOMIC DNA]</scope>
</reference>
<organismHost>
    <name type="scientific">Amazona oratrix</name>
    <name type="common">yellow-headed parrot</name>
    <dbReference type="NCBI Taxonomy" id="152276"/>
</organismHost>
<sequence length="408" mass="43470">MRAKISSQAAVAIFLALVTCCLGTVIKGLGVSGVFEDTLVVFEKVETEDVGARLVFLGDQRPKNPYGGTVRVLFQPGESGTCSIPLLQVRYSNCTNTSAAVFSGCYRTDTEFSVPRANRGTSPGFVSLRTPTMLDSGDIYVTVHLDHLPRPDAFRIKFVSLYTGNETVRISTKDRAGRDRDSYGGASSPVGGRDSNRRTASRNDDGDLPLALYGPCRPCGKNCKNLREYLLTEESWHEWTSVFAPTTVAPTTTVATTAMRSTTVSFATMTAEVITSTGTVSMEPHNTTTADMVNLTAADPPPSEPVPALNALAIGLVVGGTVASLVFLSVILGGLISCCARRRSARRLLTRSNSAREMEDLAPSSEDARTSRMSPDVVELSELVNGAPLSHRNDIGGDDLTSISSASG</sequence>
<feature type="signal peptide" evidence="2">
    <location>
        <begin position="1"/>
        <end position="23"/>
    </location>
</feature>
<feature type="chain" id="PRO_0000406866" description="Envelope glycoprotein I">
    <location>
        <begin position="24"/>
        <end position="408"/>
    </location>
</feature>
<feature type="topological domain" description="Virion surface" evidence="2">
    <location>
        <begin position="24"/>
        <end position="311"/>
    </location>
</feature>
<feature type="transmembrane region" description="Helical" evidence="2">
    <location>
        <begin position="312"/>
        <end position="332"/>
    </location>
</feature>
<feature type="topological domain" description="Intravirion" evidence="2">
    <location>
        <begin position="333"/>
        <end position="408"/>
    </location>
</feature>
<feature type="region of interest" description="Disordered" evidence="3">
    <location>
        <begin position="172"/>
        <end position="207"/>
    </location>
</feature>
<feature type="region of interest" description="Disordered" evidence="3">
    <location>
        <begin position="357"/>
        <end position="376"/>
    </location>
</feature>
<feature type="region of interest" description="Disordered" evidence="3">
    <location>
        <begin position="388"/>
        <end position="408"/>
    </location>
</feature>
<feature type="compositionally biased region" description="Basic and acidic residues" evidence="3">
    <location>
        <begin position="172"/>
        <end position="182"/>
    </location>
</feature>
<feature type="compositionally biased region" description="Basic and acidic residues" evidence="3">
    <location>
        <begin position="194"/>
        <end position="205"/>
    </location>
</feature>
<feature type="glycosylation site" description="N-linked (GlcNAc...) asparagine; by host" evidence="2">
    <location>
        <position position="93"/>
    </location>
</feature>
<feature type="glycosylation site" description="N-linked (GlcNAc...) asparagine; by host" evidence="2">
    <location>
        <position position="96"/>
    </location>
</feature>
<feature type="glycosylation site" description="N-linked (GlcNAc...) asparagine; by host" evidence="2">
    <location>
        <position position="165"/>
    </location>
</feature>
<feature type="glycosylation site" description="N-linked (GlcNAc...) asparagine; by host" evidence="2">
    <location>
        <position position="286"/>
    </location>
</feature>
<feature type="glycosylation site" description="N-linked (GlcNAc...) asparagine; by host" evidence="2">
    <location>
        <position position="294"/>
    </location>
</feature>